<name>RL10_CORJK</name>
<organism>
    <name type="scientific">Corynebacterium jeikeium (strain K411)</name>
    <dbReference type="NCBI Taxonomy" id="306537"/>
    <lineage>
        <taxon>Bacteria</taxon>
        <taxon>Bacillati</taxon>
        <taxon>Actinomycetota</taxon>
        <taxon>Actinomycetes</taxon>
        <taxon>Mycobacteriales</taxon>
        <taxon>Corynebacteriaceae</taxon>
        <taxon>Corynebacterium</taxon>
    </lineage>
</organism>
<sequence>MANPKNTASLEELKARFEQAQSTLLTEYRGLSVAETTELRRALGSDVTYSVAKNTMIKLAAREAGIELDESLLTGPTAIAFVNGEAVDAAKAMKDFGKDHKNFVIKGGYMDGATIDAAQVEAIAELDNRETTLAKLAGAMQGSLAKAAGLFNAPASQVARLAAALQEKKEQ</sequence>
<protein>
    <recommendedName>
        <fullName evidence="1">Large ribosomal subunit protein uL10</fullName>
    </recommendedName>
    <alternativeName>
        <fullName evidence="2">50S ribosomal protein L10</fullName>
    </alternativeName>
</protein>
<evidence type="ECO:0000255" key="1">
    <source>
        <dbReference type="HAMAP-Rule" id="MF_00362"/>
    </source>
</evidence>
<evidence type="ECO:0000305" key="2"/>
<accession>Q4JT29</accession>
<proteinExistence type="inferred from homology"/>
<keyword id="KW-1185">Reference proteome</keyword>
<keyword id="KW-0687">Ribonucleoprotein</keyword>
<keyword id="KW-0689">Ribosomal protein</keyword>
<keyword id="KW-0694">RNA-binding</keyword>
<keyword id="KW-0699">rRNA-binding</keyword>
<gene>
    <name evidence="1" type="primary">rplJ</name>
    <name type="ordered locus">jk1849</name>
</gene>
<dbReference type="EMBL" id="CR931997">
    <property type="protein sequence ID" value="CAI38028.1"/>
    <property type="molecule type" value="Genomic_DNA"/>
</dbReference>
<dbReference type="RefSeq" id="WP_005292022.1">
    <property type="nucleotide sequence ID" value="NC_007164.1"/>
</dbReference>
<dbReference type="SMR" id="Q4JT29"/>
<dbReference type="STRING" id="306537.jk1849"/>
<dbReference type="GeneID" id="92739473"/>
<dbReference type="KEGG" id="cjk:jk1849"/>
<dbReference type="eggNOG" id="COG0244">
    <property type="taxonomic scope" value="Bacteria"/>
</dbReference>
<dbReference type="HOGENOM" id="CLU_092227_1_0_11"/>
<dbReference type="OrthoDB" id="3186107at2"/>
<dbReference type="Proteomes" id="UP000000545">
    <property type="component" value="Chromosome"/>
</dbReference>
<dbReference type="GO" id="GO:1990904">
    <property type="term" value="C:ribonucleoprotein complex"/>
    <property type="evidence" value="ECO:0007669"/>
    <property type="project" value="UniProtKB-KW"/>
</dbReference>
<dbReference type="GO" id="GO:0005840">
    <property type="term" value="C:ribosome"/>
    <property type="evidence" value="ECO:0007669"/>
    <property type="project" value="UniProtKB-KW"/>
</dbReference>
<dbReference type="GO" id="GO:0070180">
    <property type="term" value="F:large ribosomal subunit rRNA binding"/>
    <property type="evidence" value="ECO:0007669"/>
    <property type="project" value="UniProtKB-UniRule"/>
</dbReference>
<dbReference type="GO" id="GO:0006412">
    <property type="term" value="P:translation"/>
    <property type="evidence" value="ECO:0007669"/>
    <property type="project" value="UniProtKB-UniRule"/>
</dbReference>
<dbReference type="CDD" id="cd05797">
    <property type="entry name" value="Ribosomal_L10"/>
    <property type="match status" value="1"/>
</dbReference>
<dbReference type="Gene3D" id="3.30.70.1730">
    <property type="match status" value="1"/>
</dbReference>
<dbReference type="Gene3D" id="6.10.250.290">
    <property type="match status" value="1"/>
</dbReference>
<dbReference type="HAMAP" id="MF_00362">
    <property type="entry name" value="Ribosomal_uL10"/>
    <property type="match status" value="1"/>
</dbReference>
<dbReference type="InterPro" id="IPR001790">
    <property type="entry name" value="Ribosomal_uL10"/>
</dbReference>
<dbReference type="InterPro" id="IPR043141">
    <property type="entry name" value="Ribosomal_uL10-like_sf"/>
</dbReference>
<dbReference type="InterPro" id="IPR022973">
    <property type="entry name" value="Ribosomal_uL10_bac"/>
</dbReference>
<dbReference type="InterPro" id="IPR047865">
    <property type="entry name" value="Ribosomal_uL10_bac_type"/>
</dbReference>
<dbReference type="NCBIfam" id="NF000955">
    <property type="entry name" value="PRK00099.1-1"/>
    <property type="match status" value="1"/>
</dbReference>
<dbReference type="PANTHER" id="PTHR11560">
    <property type="entry name" value="39S RIBOSOMAL PROTEIN L10, MITOCHONDRIAL"/>
    <property type="match status" value="1"/>
</dbReference>
<dbReference type="Pfam" id="PF00466">
    <property type="entry name" value="Ribosomal_L10"/>
    <property type="match status" value="1"/>
</dbReference>
<dbReference type="SUPFAM" id="SSF160369">
    <property type="entry name" value="Ribosomal protein L10-like"/>
    <property type="match status" value="1"/>
</dbReference>
<comment type="function">
    <text evidence="1">Forms part of the ribosomal stalk, playing a central role in the interaction of the ribosome with GTP-bound translation factors.</text>
</comment>
<comment type="subunit">
    <text evidence="1">Part of the ribosomal stalk of the 50S ribosomal subunit. The N-terminus interacts with L11 and the large rRNA to form the base of the stalk. The C-terminus forms an elongated spine to which L12 dimers bind in a sequential fashion forming a multimeric L10(L12)X complex.</text>
</comment>
<comment type="similarity">
    <text evidence="1">Belongs to the universal ribosomal protein uL10 family.</text>
</comment>
<feature type="chain" id="PRO_0000234845" description="Large ribosomal subunit protein uL10">
    <location>
        <begin position="1"/>
        <end position="171"/>
    </location>
</feature>
<reference key="1">
    <citation type="journal article" date="2005" name="J. Bacteriol.">
        <title>Complete genome sequence and analysis of the multiresistant nosocomial pathogen Corynebacterium jeikeium K411, a lipid-requiring bacterium of the human skin flora.</title>
        <authorList>
            <person name="Tauch A."/>
            <person name="Kaiser O."/>
            <person name="Hain T."/>
            <person name="Goesmann A."/>
            <person name="Weisshaar B."/>
            <person name="Albersmeier A."/>
            <person name="Bekel T."/>
            <person name="Bischoff N."/>
            <person name="Brune I."/>
            <person name="Chakraborty T."/>
            <person name="Kalinowski J."/>
            <person name="Meyer F."/>
            <person name="Rupp O."/>
            <person name="Schneiker S."/>
            <person name="Viehoever P."/>
            <person name="Puehler A."/>
        </authorList>
    </citation>
    <scope>NUCLEOTIDE SEQUENCE [LARGE SCALE GENOMIC DNA]</scope>
    <source>
        <strain>K411</strain>
    </source>
</reference>